<keyword id="KW-0131">Cell cycle</keyword>
<keyword id="KW-0132">Cell division</keyword>
<keyword id="KW-0159">Chromosome partition</keyword>
<keyword id="KW-0963">Cytoplasm</keyword>
<keyword id="KW-0229">DNA integration</keyword>
<keyword id="KW-0233">DNA recombination</keyword>
<keyword id="KW-0238">DNA-binding</keyword>
<protein>
    <recommendedName>
        <fullName evidence="1">Tyrosine recombinase XerC</fullName>
    </recommendedName>
</protein>
<name>XERC_SHEPC</name>
<proteinExistence type="inferred from homology"/>
<feature type="chain" id="PRO_1000070037" description="Tyrosine recombinase XerC">
    <location>
        <begin position="1"/>
        <end position="302"/>
    </location>
</feature>
<feature type="domain" description="Core-binding (CB)" evidence="3">
    <location>
        <begin position="6"/>
        <end position="90"/>
    </location>
</feature>
<feature type="domain" description="Tyr recombinase" evidence="2">
    <location>
        <begin position="111"/>
        <end position="290"/>
    </location>
</feature>
<feature type="active site" evidence="1">
    <location>
        <position position="150"/>
    </location>
</feature>
<feature type="active site" evidence="1">
    <location>
        <position position="174"/>
    </location>
</feature>
<feature type="active site" evidence="1">
    <location>
        <position position="242"/>
    </location>
</feature>
<feature type="active site" evidence="1">
    <location>
        <position position="245"/>
    </location>
</feature>
<feature type="active site" evidence="1">
    <location>
        <position position="268"/>
    </location>
</feature>
<feature type="active site" description="O-(3'-phospho-DNA)-tyrosine intermediate" evidence="1">
    <location>
        <position position="277"/>
    </location>
</feature>
<organism>
    <name type="scientific">Shewanella putrefaciens (strain CN-32 / ATCC BAA-453)</name>
    <dbReference type="NCBI Taxonomy" id="319224"/>
    <lineage>
        <taxon>Bacteria</taxon>
        <taxon>Pseudomonadati</taxon>
        <taxon>Pseudomonadota</taxon>
        <taxon>Gammaproteobacteria</taxon>
        <taxon>Alteromonadales</taxon>
        <taxon>Shewanellaceae</taxon>
        <taxon>Shewanella</taxon>
    </lineage>
</organism>
<accession>A4YBF5</accession>
<evidence type="ECO:0000255" key="1">
    <source>
        <dbReference type="HAMAP-Rule" id="MF_01808"/>
    </source>
</evidence>
<evidence type="ECO:0000255" key="2">
    <source>
        <dbReference type="PROSITE-ProRule" id="PRU01246"/>
    </source>
</evidence>
<evidence type="ECO:0000255" key="3">
    <source>
        <dbReference type="PROSITE-ProRule" id="PRU01248"/>
    </source>
</evidence>
<comment type="function">
    <text evidence="1">Site-specific tyrosine recombinase, which acts by catalyzing the cutting and rejoining of the recombining DNA molecules. The XerC-XerD complex is essential to convert dimers of the bacterial chromosome into monomers to permit their segregation at cell division. It also contributes to the segregational stability of plasmids.</text>
</comment>
<comment type="subunit">
    <text evidence="1">Forms a cyclic heterotetrameric complex composed of two molecules of XerC and two molecules of XerD.</text>
</comment>
<comment type="subcellular location">
    <subcellularLocation>
        <location evidence="1">Cytoplasm</location>
    </subcellularLocation>
</comment>
<comment type="similarity">
    <text evidence="1">Belongs to the 'phage' integrase family. XerC subfamily.</text>
</comment>
<dbReference type="EMBL" id="CP000681">
    <property type="protein sequence ID" value="ABP77288.1"/>
    <property type="molecule type" value="Genomic_DNA"/>
</dbReference>
<dbReference type="SMR" id="A4YBF5"/>
<dbReference type="STRING" id="319224.Sputcn32_3580"/>
<dbReference type="KEGG" id="spc:Sputcn32_3580"/>
<dbReference type="eggNOG" id="COG4973">
    <property type="taxonomic scope" value="Bacteria"/>
</dbReference>
<dbReference type="HOGENOM" id="CLU_027562_9_0_6"/>
<dbReference type="GO" id="GO:0005737">
    <property type="term" value="C:cytoplasm"/>
    <property type="evidence" value="ECO:0007669"/>
    <property type="project" value="UniProtKB-SubCell"/>
</dbReference>
<dbReference type="GO" id="GO:0003677">
    <property type="term" value="F:DNA binding"/>
    <property type="evidence" value="ECO:0007669"/>
    <property type="project" value="UniProtKB-KW"/>
</dbReference>
<dbReference type="GO" id="GO:0009037">
    <property type="term" value="F:tyrosine-based site-specific recombinase activity"/>
    <property type="evidence" value="ECO:0007669"/>
    <property type="project" value="UniProtKB-UniRule"/>
</dbReference>
<dbReference type="GO" id="GO:0051301">
    <property type="term" value="P:cell division"/>
    <property type="evidence" value="ECO:0007669"/>
    <property type="project" value="UniProtKB-KW"/>
</dbReference>
<dbReference type="GO" id="GO:0007059">
    <property type="term" value="P:chromosome segregation"/>
    <property type="evidence" value="ECO:0007669"/>
    <property type="project" value="UniProtKB-UniRule"/>
</dbReference>
<dbReference type="GO" id="GO:0006313">
    <property type="term" value="P:DNA transposition"/>
    <property type="evidence" value="ECO:0007669"/>
    <property type="project" value="UniProtKB-UniRule"/>
</dbReference>
<dbReference type="CDD" id="cd00798">
    <property type="entry name" value="INT_XerDC_C"/>
    <property type="match status" value="1"/>
</dbReference>
<dbReference type="Gene3D" id="1.10.150.130">
    <property type="match status" value="1"/>
</dbReference>
<dbReference type="Gene3D" id="1.10.443.10">
    <property type="entry name" value="Intergrase catalytic core"/>
    <property type="match status" value="1"/>
</dbReference>
<dbReference type="HAMAP" id="MF_01808">
    <property type="entry name" value="Recomb_XerC_XerD"/>
    <property type="match status" value="1"/>
</dbReference>
<dbReference type="InterPro" id="IPR044068">
    <property type="entry name" value="CB"/>
</dbReference>
<dbReference type="InterPro" id="IPR011010">
    <property type="entry name" value="DNA_brk_join_enz"/>
</dbReference>
<dbReference type="InterPro" id="IPR013762">
    <property type="entry name" value="Integrase-like_cat_sf"/>
</dbReference>
<dbReference type="InterPro" id="IPR002104">
    <property type="entry name" value="Integrase_catalytic"/>
</dbReference>
<dbReference type="InterPro" id="IPR010998">
    <property type="entry name" value="Integrase_recombinase_N"/>
</dbReference>
<dbReference type="InterPro" id="IPR004107">
    <property type="entry name" value="Integrase_SAM-like_N"/>
</dbReference>
<dbReference type="InterPro" id="IPR011931">
    <property type="entry name" value="Recomb_XerC"/>
</dbReference>
<dbReference type="InterPro" id="IPR023009">
    <property type="entry name" value="Tyrosine_recombinase_XerC/XerD"/>
</dbReference>
<dbReference type="InterPro" id="IPR050090">
    <property type="entry name" value="Tyrosine_recombinase_XerCD"/>
</dbReference>
<dbReference type="NCBIfam" id="TIGR02224">
    <property type="entry name" value="recomb_XerC"/>
    <property type="match status" value="1"/>
</dbReference>
<dbReference type="PANTHER" id="PTHR30349">
    <property type="entry name" value="PHAGE INTEGRASE-RELATED"/>
    <property type="match status" value="1"/>
</dbReference>
<dbReference type="PANTHER" id="PTHR30349:SF81">
    <property type="entry name" value="TYROSINE RECOMBINASE XERC"/>
    <property type="match status" value="1"/>
</dbReference>
<dbReference type="Pfam" id="PF02899">
    <property type="entry name" value="Phage_int_SAM_1"/>
    <property type="match status" value="1"/>
</dbReference>
<dbReference type="Pfam" id="PF00589">
    <property type="entry name" value="Phage_integrase"/>
    <property type="match status" value="1"/>
</dbReference>
<dbReference type="SUPFAM" id="SSF56349">
    <property type="entry name" value="DNA breaking-rejoining enzymes"/>
    <property type="match status" value="1"/>
</dbReference>
<dbReference type="PROSITE" id="PS51900">
    <property type="entry name" value="CB"/>
    <property type="match status" value="1"/>
</dbReference>
<dbReference type="PROSITE" id="PS51898">
    <property type="entry name" value="TYR_RECOMBINASE"/>
    <property type="match status" value="1"/>
</dbReference>
<reference key="1">
    <citation type="submission" date="2007-04" db="EMBL/GenBank/DDBJ databases">
        <title>Complete sequence of Shewanella putrefaciens CN-32.</title>
        <authorList>
            <consortium name="US DOE Joint Genome Institute"/>
            <person name="Copeland A."/>
            <person name="Lucas S."/>
            <person name="Lapidus A."/>
            <person name="Barry K."/>
            <person name="Detter J.C."/>
            <person name="Glavina del Rio T."/>
            <person name="Hammon N."/>
            <person name="Israni S."/>
            <person name="Dalin E."/>
            <person name="Tice H."/>
            <person name="Pitluck S."/>
            <person name="Chain P."/>
            <person name="Malfatti S."/>
            <person name="Shin M."/>
            <person name="Vergez L."/>
            <person name="Schmutz J."/>
            <person name="Larimer F."/>
            <person name="Land M."/>
            <person name="Hauser L."/>
            <person name="Kyrpides N."/>
            <person name="Mikhailova N."/>
            <person name="Romine M.F."/>
            <person name="Fredrickson J."/>
            <person name="Tiedje J."/>
            <person name="Richardson P."/>
        </authorList>
    </citation>
    <scope>NUCLEOTIDE SEQUENCE [LARGE SCALE GENOMIC DNA]</scope>
    <source>
        <strain>CN-32 / ATCC BAA-453</strain>
    </source>
</reference>
<sequence>MGDMSDLEVTCLQDYERYLHSERQLSAHTVHNYLYELNRVSTLLPKDVTLLNVGREHWQQVLAKLHRKGLSPRSLSLCLSAIKQWGEFLLREGMIAVNPAKGLSAPKQAKPLPKNMDVDSLTHLLEIEGTDPLTLRDKAMMELFYSSGLRLAELAALNLSSVQYDLREVRVLGKGNKERIVPVGSYAIKALEAWLVCRQQIPCEDCALFVTGKGRRLSHRSIQSRMAKWGQEQALSVRVHPHKLRHSFATHMLESSADLRAVQELLGHANLSTTQIYTSLDFQHLAKVYDSAHPRAKKQQDK</sequence>
<gene>
    <name evidence="1" type="primary">xerC</name>
    <name type="ordered locus">Sputcn32_3580</name>
</gene>